<accession>O25986</accession>
<protein>
    <recommendedName>
        <fullName>Putative biopolymer transport protein ExbB-like 2</fullName>
    </recommendedName>
</protein>
<dbReference type="EMBL" id="AE000511">
    <property type="protein sequence ID" value="AAD08483.1"/>
    <property type="molecule type" value="Genomic_DNA"/>
</dbReference>
<dbReference type="PIR" id="E64700">
    <property type="entry name" value="E64700"/>
</dbReference>
<dbReference type="RefSeq" id="NP_208236.1">
    <property type="nucleotide sequence ID" value="NC_000915.1"/>
</dbReference>
<dbReference type="SMR" id="O25986"/>
<dbReference type="STRING" id="85962.HP_1445"/>
<dbReference type="PaxDb" id="85962-C694_07485"/>
<dbReference type="EnsemblBacteria" id="AAD08483">
    <property type="protein sequence ID" value="AAD08483"/>
    <property type="gene ID" value="HP_1445"/>
</dbReference>
<dbReference type="KEGG" id="heo:C694_07485"/>
<dbReference type="KEGG" id="hpy:HP_1445"/>
<dbReference type="PATRIC" id="fig|85962.47.peg.1554"/>
<dbReference type="eggNOG" id="COG0811">
    <property type="taxonomic scope" value="Bacteria"/>
</dbReference>
<dbReference type="InParanoid" id="O25986"/>
<dbReference type="OrthoDB" id="9805133at2"/>
<dbReference type="PhylomeDB" id="O25986"/>
<dbReference type="Proteomes" id="UP000000429">
    <property type="component" value="Chromosome"/>
</dbReference>
<dbReference type="GO" id="GO:0005886">
    <property type="term" value="C:plasma membrane"/>
    <property type="evidence" value="ECO:0000318"/>
    <property type="project" value="GO_Central"/>
</dbReference>
<dbReference type="GO" id="GO:0017038">
    <property type="term" value="P:protein import"/>
    <property type="evidence" value="ECO:0000318"/>
    <property type="project" value="GO_Central"/>
</dbReference>
<dbReference type="GO" id="GO:0055085">
    <property type="term" value="P:transmembrane transport"/>
    <property type="evidence" value="ECO:0007669"/>
    <property type="project" value="InterPro"/>
</dbReference>
<dbReference type="InterPro" id="IPR050790">
    <property type="entry name" value="ExbB/TolQ_transport"/>
</dbReference>
<dbReference type="InterPro" id="IPR002898">
    <property type="entry name" value="MotA_ExbB_proton_chnl"/>
</dbReference>
<dbReference type="InterPro" id="IPR014172">
    <property type="entry name" value="TonB_ExbB_2"/>
</dbReference>
<dbReference type="NCBIfam" id="TIGR02805">
    <property type="entry name" value="exbB2"/>
    <property type="match status" value="1"/>
</dbReference>
<dbReference type="PANTHER" id="PTHR30625:SF15">
    <property type="entry name" value="BIOPOLYMER TRANSPORT PROTEIN EXBB"/>
    <property type="match status" value="1"/>
</dbReference>
<dbReference type="PANTHER" id="PTHR30625">
    <property type="entry name" value="PROTEIN TOLQ"/>
    <property type="match status" value="1"/>
</dbReference>
<dbReference type="Pfam" id="PF01618">
    <property type="entry name" value="MotA_ExbB"/>
    <property type="match status" value="1"/>
</dbReference>
<organism>
    <name type="scientific">Helicobacter pylori (strain ATCC 700392 / 26695)</name>
    <name type="common">Campylobacter pylori</name>
    <dbReference type="NCBI Taxonomy" id="85962"/>
    <lineage>
        <taxon>Bacteria</taxon>
        <taxon>Pseudomonadati</taxon>
        <taxon>Campylobacterota</taxon>
        <taxon>Epsilonproteobacteria</taxon>
        <taxon>Campylobacterales</taxon>
        <taxon>Helicobacteraceae</taxon>
        <taxon>Helicobacter</taxon>
    </lineage>
</organism>
<reference key="1">
    <citation type="journal article" date="1997" name="Nature">
        <title>The complete genome sequence of the gastric pathogen Helicobacter pylori.</title>
        <authorList>
            <person name="Tomb J.-F."/>
            <person name="White O."/>
            <person name="Kerlavage A.R."/>
            <person name="Clayton R.A."/>
            <person name="Sutton G.G."/>
            <person name="Fleischmann R.D."/>
            <person name="Ketchum K.A."/>
            <person name="Klenk H.-P."/>
            <person name="Gill S.R."/>
            <person name="Dougherty B.A."/>
            <person name="Nelson K.E."/>
            <person name="Quackenbush J."/>
            <person name="Zhou L."/>
            <person name="Kirkness E.F."/>
            <person name="Peterson S.N."/>
            <person name="Loftus B.J."/>
            <person name="Richardson D.L."/>
            <person name="Dodson R.J."/>
            <person name="Khalak H.G."/>
            <person name="Glodek A."/>
            <person name="McKenney K."/>
            <person name="FitzGerald L.M."/>
            <person name="Lee N."/>
            <person name="Adams M.D."/>
            <person name="Hickey E.K."/>
            <person name="Berg D.E."/>
            <person name="Gocayne J.D."/>
            <person name="Utterback T.R."/>
            <person name="Peterson J.D."/>
            <person name="Kelley J.M."/>
            <person name="Cotton M.D."/>
            <person name="Weidman J.F."/>
            <person name="Fujii C."/>
            <person name="Bowman C."/>
            <person name="Watthey L."/>
            <person name="Wallin E."/>
            <person name="Hayes W.S."/>
            <person name="Borodovsky M."/>
            <person name="Karp P.D."/>
            <person name="Smith H.O."/>
            <person name="Fraser C.M."/>
            <person name="Venter J.C."/>
        </authorList>
    </citation>
    <scope>NUCLEOTIDE SEQUENCE [LARGE SCALE GENOMIC DNA]</scope>
    <source>
        <strain>ATCC 700392 / 26695</strain>
    </source>
</reference>
<gene>
    <name type="ordered locus">HP_1445</name>
</gene>
<proteinExistence type="inferred from homology"/>
<keyword id="KW-0997">Cell inner membrane</keyword>
<keyword id="KW-1003">Cell membrane</keyword>
<keyword id="KW-0472">Membrane</keyword>
<keyword id="KW-0653">Protein transport</keyword>
<keyword id="KW-1185">Reference proteome</keyword>
<keyword id="KW-0812">Transmembrane</keyword>
<keyword id="KW-1133">Transmembrane helix</keyword>
<keyword id="KW-0813">Transport</keyword>
<comment type="subcellular location">
    <subcellularLocation>
        <location evidence="2">Cell inner membrane</location>
        <topology evidence="2">Multi-pass membrane protein</topology>
    </subcellularLocation>
</comment>
<comment type="similarity">
    <text evidence="2">Belongs to the ExbB/TolQ family.</text>
</comment>
<sequence length="150" mass="16638">MKEMVDYGIIGFLIFLSVIVIAIAIERLWFFATLRVDDYTDRRKLELALHKRLTLVATIGSNAPYIGLLGTVMGIMLTFMDLGSASGIDTKAIMTNLALALKATGMGLLVAIPAIVIYNLLVRKSEILVTKWDIFHHPVDTQSHEIYSKA</sequence>
<name>EXBL2_HELPY</name>
<feature type="chain" id="PRO_0000145817" description="Putative biopolymer transport protein ExbB-like 2">
    <location>
        <begin position="1"/>
        <end position="150"/>
    </location>
</feature>
<feature type="transmembrane region" description="Helical" evidence="1">
    <location>
        <begin position="5"/>
        <end position="25"/>
    </location>
</feature>
<feature type="transmembrane region" description="Helical" evidence="1">
    <location>
        <begin position="63"/>
        <end position="83"/>
    </location>
</feature>
<feature type="transmembrane region" description="Helical" evidence="1">
    <location>
        <begin position="97"/>
        <end position="117"/>
    </location>
</feature>
<evidence type="ECO:0000255" key="1"/>
<evidence type="ECO:0000305" key="2"/>